<protein>
    <recommendedName>
        <fullName evidence="1">2,3-bisphosphoglycerate-dependent phosphoglycerate mutase</fullName>
        <shortName evidence="1">BPG-dependent PGAM</shortName>
        <shortName evidence="1">PGAM</shortName>
        <shortName evidence="1">Phosphoglyceromutase</shortName>
        <shortName evidence="1">dPGM</shortName>
        <ecNumber evidence="1">5.4.2.11</ecNumber>
    </recommendedName>
</protein>
<accession>P65708</accession>
<accession>Q99RL4</accession>
<comment type="function">
    <text evidence="1">Catalyzes the interconversion of 2-phosphoglycerate and 3-phosphoglycerate.</text>
</comment>
<comment type="catalytic activity">
    <reaction evidence="1">
        <text>(2R)-2-phosphoglycerate = (2R)-3-phosphoglycerate</text>
        <dbReference type="Rhea" id="RHEA:15901"/>
        <dbReference type="ChEBI" id="CHEBI:58272"/>
        <dbReference type="ChEBI" id="CHEBI:58289"/>
        <dbReference type="EC" id="5.4.2.11"/>
    </reaction>
</comment>
<comment type="pathway">
    <text evidence="1">Carbohydrate degradation; glycolysis; pyruvate from D-glyceraldehyde 3-phosphate: step 3/5.</text>
</comment>
<comment type="similarity">
    <text evidence="1">Belongs to the phosphoglycerate mutase family. BPG-dependent PGAM subfamily.</text>
</comment>
<keyword id="KW-0312">Gluconeogenesis</keyword>
<keyword id="KW-0324">Glycolysis</keyword>
<keyword id="KW-0413">Isomerase</keyword>
<sequence length="228" mass="26680">MPKLILCRHGQSEWNAKNLFTGWEDVNLSEQGINEATRAGEKVRENNIAIDVAFTSLLTRALDTTHYILTESKQQWIPVYKSWRLNERHYGGLQGLNKDDARKEFGEEQVHIWRRSYDVKPPAETEEQREAYLADRRYNHLDKRMMPYSESLKDTLVRVIPFWTDHISQYLLDGQTVLVSAHGNSIRALIKYLEDVSDEDIINYEIKTGAPLVYELTDDLEVIDKYYL</sequence>
<gene>
    <name evidence="1" type="primary">gpmA</name>
    <name type="ordered locus">SAV2416</name>
</gene>
<organism>
    <name type="scientific">Staphylococcus aureus (strain Mu50 / ATCC 700699)</name>
    <dbReference type="NCBI Taxonomy" id="158878"/>
    <lineage>
        <taxon>Bacteria</taxon>
        <taxon>Bacillati</taxon>
        <taxon>Bacillota</taxon>
        <taxon>Bacilli</taxon>
        <taxon>Bacillales</taxon>
        <taxon>Staphylococcaceae</taxon>
        <taxon>Staphylococcus</taxon>
    </lineage>
</organism>
<proteinExistence type="inferred from homology"/>
<dbReference type="EC" id="5.4.2.11" evidence="1"/>
<dbReference type="EMBL" id="BA000017">
    <property type="protein sequence ID" value="BAB58578.1"/>
    <property type="molecule type" value="Genomic_DNA"/>
</dbReference>
<dbReference type="RefSeq" id="WP_001125208.1">
    <property type="nucleotide sequence ID" value="NC_002758.2"/>
</dbReference>
<dbReference type="SMR" id="P65708"/>
<dbReference type="KEGG" id="sav:SAV2416"/>
<dbReference type="HOGENOM" id="CLU_033323_1_5_9"/>
<dbReference type="PhylomeDB" id="P65708"/>
<dbReference type="UniPathway" id="UPA00109">
    <property type="reaction ID" value="UER00186"/>
</dbReference>
<dbReference type="Proteomes" id="UP000002481">
    <property type="component" value="Chromosome"/>
</dbReference>
<dbReference type="GO" id="GO:0004619">
    <property type="term" value="F:phosphoglycerate mutase activity"/>
    <property type="evidence" value="ECO:0007669"/>
    <property type="project" value="UniProtKB-EC"/>
</dbReference>
<dbReference type="GO" id="GO:0006094">
    <property type="term" value="P:gluconeogenesis"/>
    <property type="evidence" value="ECO:0007669"/>
    <property type="project" value="UniProtKB-UniRule"/>
</dbReference>
<dbReference type="GO" id="GO:0006096">
    <property type="term" value="P:glycolytic process"/>
    <property type="evidence" value="ECO:0007669"/>
    <property type="project" value="UniProtKB-UniRule"/>
</dbReference>
<dbReference type="CDD" id="cd07067">
    <property type="entry name" value="HP_PGM_like"/>
    <property type="match status" value="1"/>
</dbReference>
<dbReference type="FunFam" id="3.40.50.1240:FF:000003">
    <property type="entry name" value="2,3-bisphosphoglycerate-dependent phosphoglycerate mutase"/>
    <property type="match status" value="1"/>
</dbReference>
<dbReference type="Gene3D" id="3.40.50.1240">
    <property type="entry name" value="Phosphoglycerate mutase-like"/>
    <property type="match status" value="1"/>
</dbReference>
<dbReference type="HAMAP" id="MF_01039">
    <property type="entry name" value="PGAM_GpmA"/>
    <property type="match status" value="1"/>
</dbReference>
<dbReference type="InterPro" id="IPR013078">
    <property type="entry name" value="His_Pase_superF_clade-1"/>
</dbReference>
<dbReference type="InterPro" id="IPR029033">
    <property type="entry name" value="His_PPase_superfam"/>
</dbReference>
<dbReference type="InterPro" id="IPR001345">
    <property type="entry name" value="PG/BPGM_mutase_AS"/>
</dbReference>
<dbReference type="InterPro" id="IPR005952">
    <property type="entry name" value="Phosphogly_mut1"/>
</dbReference>
<dbReference type="NCBIfam" id="TIGR01258">
    <property type="entry name" value="pgm_1"/>
    <property type="match status" value="1"/>
</dbReference>
<dbReference type="NCBIfam" id="NF010713">
    <property type="entry name" value="PRK14115.1"/>
    <property type="match status" value="1"/>
</dbReference>
<dbReference type="NCBIfam" id="NF010717">
    <property type="entry name" value="PRK14119.1"/>
    <property type="match status" value="1"/>
</dbReference>
<dbReference type="PANTHER" id="PTHR11931">
    <property type="entry name" value="PHOSPHOGLYCERATE MUTASE"/>
    <property type="match status" value="1"/>
</dbReference>
<dbReference type="Pfam" id="PF00300">
    <property type="entry name" value="His_Phos_1"/>
    <property type="match status" value="1"/>
</dbReference>
<dbReference type="PIRSF" id="PIRSF000709">
    <property type="entry name" value="6PFK_2-Ptase"/>
    <property type="match status" value="1"/>
</dbReference>
<dbReference type="SMART" id="SM00855">
    <property type="entry name" value="PGAM"/>
    <property type="match status" value="1"/>
</dbReference>
<dbReference type="SUPFAM" id="SSF53254">
    <property type="entry name" value="Phosphoglycerate mutase-like"/>
    <property type="match status" value="1"/>
</dbReference>
<dbReference type="PROSITE" id="PS00175">
    <property type="entry name" value="PG_MUTASE"/>
    <property type="match status" value="1"/>
</dbReference>
<evidence type="ECO:0000255" key="1">
    <source>
        <dbReference type="HAMAP-Rule" id="MF_01039"/>
    </source>
</evidence>
<feature type="chain" id="PRO_0000179911" description="2,3-bisphosphoglycerate-dependent phosphoglycerate mutase">
    <location>
        <begin position="1"/>
        <end position="228"/>
    </location>
</feature>
<feature type="active site" description="Tele-phosphohistidine intermediate" evidence="1">
    <location>
        <position position="9"/>
    </location>
</feature>
<feature type="active site" description="Proton donor/acceptor" evidence="1">
    <location>
        <position position="87"/>
    </location>
</feature>
<feature type="binding site" evidence="1">
    <location>
        <begin position="8"/>
        <end position="15"/>
    </location>
    <ligand>
        <name>substrate</name>
    </ligand>
</feature>
<feature type="binding site" evidence="1">
    <location>
        <begin position="21"/>
        <end position="22"/>
    </location>
    <ligand>
        <name>substrate</name>
    </ligand>
</feature>
<feature type="binding site" evidence="1">
    <location>
        <position position="60"/>
    </location>
    <ligand>
        <name>substrate</name>
    </ligand>
</feature>
<feature type="binding site" evidence="1">
    <location>
        <begin position="87"/>
        <end position="90"/>
    </location>
    <ligand>
        <name>substrate</name>
    </ligand>
</feature>
<feature type="binding site" evidence="1">
    <location>
        <position position="98"/>
    </location>
    <ligand>
        <name>substrate</name>
    </ligand>
</feature>
<feature type="binding site" evidence="1">
    <location>
        <begin position="114"/>
        <end position="115"/>
    </location>
    <ligand>
        <name>substrate</name>
    </ligand>
</feature>
<feature type="binding site" evidence="1">
    <location>
        <begin position="183"/>
        <end position="184"/>
    </location>
    <ligand>
        <name>substrate</name>
    </ligand>
</feature>
<feature type="site" description="Transition state stabilizer" evidence="1">
    <location>
        <position position="182"/>
    </location>
</feature>
<name>GPMA_STAAM</name>
<reference key="1">
    <citation type="journal article" date="2001" name="Lancet">
        <title>Whole genome sequencing of meticillin-resistant Staphylococcus aureus.</title>
        <authorList>
            <person name="Kuroda M."/>
            <person name="Ohta T."/>
            <person name="Uchiyama I."/>
            <person name="Baba T."/>
            <person name="Yuzawa H."/>
            <person name="Kobayashi I."/>
            <person name="Cui L."/>
            <person name="Oguchi A."/>
            <person name="Aoki K."/>
            <person name="Nagai Y."/>
            <person name="Lian J.-Q."/>
            <person name="Ito T."/>
            <person name="Kanamori M."/>
            <person name="Matsumaru H."/>
            <person name="Maruyama A."/>
            <person name="Murakami H."/>
            <person name="Hosoyama A."/>
            <person name="Mizutani-Ui Y."/>
            <person name="Takahashi N.K."/>
            <person name="Sawano T."/>
            <person name="Inoue R."/>
            <person name="Kaito C."/>
            <person name="Sekimizu K."/>
            <person name="Hirakawa H."/>
            <person name="Kuhara S."/>
            <person name="Goto S."/>
            <person name="Yabuzaki J."/>
            <person name="Kanehisa M."/>
            <person name="Yamashita A."/>
            <person name="Oshima K."/>
            <person name="Furuya K."/>
            <person name="Yoshino C."/>
            <person name="Shiba T."/>
            <person name="Hattori M."/>
            <person name="Ogasawara N."/>
            <person name="Hayashi H."/>
            <person name="Hiramatsu K."/>
        </authorList>
    </citation>
    <scope>NUCLEOTIDE SEQUENCE [LARGE SCALE GENOMIC DNA]</scope>
    <source>
        <strain>Mu50 / ATCC 700699</strain>
    </source>
</reference>